<name>VPN1_BPPHE</name>
<comment type="subcellular location">
    <subcellularLocation>
        <location evidence="2 4">Virion</location>
    </subcellularLocation>
</comment>
<keyword id="KW-0903">Direct protein sequencing</keyword>
<keyword id="KW-1185">Reference proteome</keyword>
<keyword id="KW-0946">Virion</keyword>
<organism>
    <name type="scientific">Enterococcus phage phiEF24C</name>
    <name type="common">Enterococcus bacteriophage phi-EF24C</name>
    <dbReference type="NCBI Taxonomy" id="442493"/>
    <lineage>
        <taxon>Viruses</taxon>
        <taxon>Duplodnaviria</taxon>
        <taxon>Heunggongvirae</taxon>
        <taxon>Uroviricota</taxon>
        <taxon>Caudoviricetes</taxon>
        <taxon>Herelleviridae</taxon>
        <taxon>Brockvirinae</taxon>
        <taxon>Kochikohdavirus</taxon>
        <taxon>Kochikohdavirus EF24C</taxon>
    </lineage>
</organism>
<accession>P85225</accession>
<accession>A8E275</accession>
<evidence type="ECO:0000256" key="1">
    <source>
        <dbReference type="SAM" id="MobiDB-lite"/>
    </source>
</evidence>
<evidence type="ECO:0000269" key="2">
    <source>
    </source>
</evidence>
<evidence type="ECO:0000303" key="3">
    <source>
    </source>
</evidence>
<evidence type="ECO:0000305" key="4"/>
<evidence type="ECO:0000312" key="5">
    <source>
        <dbReference type="EMBL" id="BAF81291.1"/>
    </source>
</evidence>
<dbReference type="EMBL" id="AP009390">
    <property type="protein sequence ID" value="BAF81291.1"/>
    <property type="molecule type" value="Genomic_DNA"/>
</dbReference>
<dbReference type="RefSeq" id="YP_001504132.1">
    <property type="nucleotide sequence ID" value="NC_009904.1"/>
</dbReference>
<dbReference type="SMR" id="P85225"/>
<dbReference type="GeneID" id="5666428"/>
<dbReference type="KEGG" id="vg:5666428"/>
<dbReference type="OrthoDB" id="1218at10239"/>
<dbReference type="Proteomes" id="UP000001151">
    <property type="component" value="Genome"/>
</dbReference>
<dbReference type="GO" id="GO:0044423">
    <property type="term" value="C:virion component"/>
    <property type="evidence" value="ECO:0007669"/>
    <property type="project" value="UniProtKB-KW"/>
</dbReference>
<proteinExistence type="evidence at protein level"/>
<organismHost>
    <name type="scientific">Enterococcus faecalis</name>
    <name type="common">Streptococcus faecalis</name>
    <dbReference type="NCBI Taxonomy" id="1351"/>
</organismHost>
<reference evidence="5" key="1">
    <citation type="journal article" date="2008" name="Appl. Environ. Microbiol.">
        <title>In silico and in vivo evaluation of bacteriophage phiEF24C, a candidate for treatment of Enterococcus faecalis infections.</title>
        <authorList>
            <person name="Uchiyama J."/>
            <person name="Rashel M."/>
            <person name="Takemura I."/>
            <person name="Wakiguchi H."/>
            <person name="Matsuzaki S."/>
        </authorList>
    </citation>
    <scope>NUCLEOTIDE SEQUENCE [GENOMIC DNA]</scope>
</reference>
<reference evidence="4" key="2">
    <citation type="journal article" date="2008" name="FEMS Microbiol. Lett.">
        <title>Isolation and characterization of a novel Enterococcus faecalis bacteriophage phiEF24C as a therapeutic candidate.</title>
        <authorList>
            <person name="Uchiyama J."/>
            <person name="Rashel M."/>
            <person name="Maeda Y."/>
            <person name="Takemura I."/>
            <person name="Sugihara S."/>
            <person name="Akechi K."/>
            <person name="Muraoka A."/>
            <person name="Wakiguchi H."/>
            <person name="Matsuzaki S."/>
        </authorList>
    </citation>
    <scope>PROTEIN SEQUENCE OF 2-11</scope>
</reference>
<sequence length="569" mass="61970">MAVEQFPRKKVSRPHTEITVDTSGIGGSSSSSDKTLMLVGSAKGGKPDTVYRFRNYQQAKQVLRSGDLLDAIELAWNASDVNTASAGDILAVRVEDAKNATLTKGGLTFASTIYGVDANEIQVALEDNNLTHTKRLTVAFSKDGYKKVFDNLGKIFSIQYKGSEAQANFTIAQDSISKKATTLTLNVGSEPESTTEVMKYELGQGVYSETNVLVSAINSLPDWEAKFFPIGDKNLPTDALEAVTKVDVKTEAVFVGALAGDIAKQLEYNDYVTVAVDATKPVEDFELTNLTGGSDGTAPESWANKFPLLANEGGYYLVPLTDKQAVHSEALAFVKDRTDNGDPMRIIVGGGTNETVEESITRATNLRDPRASLVGFSGTRKMDDGRLLKLPGYMMASQIAGIASGLEVGEAITFKHFNVTSVDRVFESSQLDMLNESGVISIEFVRNRTLTAFRVVQDVTTYNDKSDPVKNEMSVGEANDFLVSELKIELDNNFIGTKVIDTSASLIKNFIQSFLDNKKRAREIQDYTPEEVQVVLEGDVASISMTVMPIRSLNKITVQLVYKQQILTA</sequence>
<protein>
    <recommendedName>
        <fullName evidence="3">Putative tail sheath protein</fullName>
    </recommendedName>
</protein>
<feature type="initiator methionine" description="Removed" evidence="2">
    <location>
        <position position="1"/>
    </location>
</feature>
<feature type="chain" id="PRO_0000302095" description="Putative tail sheath protein" evidence="2">
    <location>
        <begin position="2"/>
        <end position="569"/>
    </location>
</feature>
<feature type="region of interest" description="Disordered" evidence="1">
    <location>
        <begin position="1"/>
        <end position="32"/>
    </location>
</feature>